<comment type="function">
    <text>Plasmin dissolves the fibrin of blood clots and acts as a proteolytic factor in a variety of other processes including embryonic development, tissue remodeling, tumor invasion, and inflammation.</text>
</comment>
<comment type="catalytic activity">
    <reaction>
        <text>Preferential cleavage: Lys-|-Xaa &gt; Arg-|-Xaa, higher selectivity than trypsin. Converts fibrin into soluble products.</text>
        <dbReference type="EC" id="3.4.21.7"/>
    </reaction>
</comment>
<comment type="subcellular location">
    <subcellularLocation>
        <location>Secreted</location>
    </subcellularLocation>
</comment>
<comment type="similarity">
    <text evidence="2">Belongs to the peptidase S1 family. Plasminogen subfamily.</text>
</comment>
<organism>
    <name type="scientific">Petromyzon marinus</name>
    <name type="common">Sea lamprey</name>
    <dbReference type="NCBI Taxonomy" id="7757"/>
    <lineage>
        <taxon>Eukaryota</taxon>
        <taxon>Metazoa</taxon>
        <taxon>Chordata</taxon>
        <taxon>Craniata</taxon>
        <taxon>Vertebrata</taxon>
        <taxon>Cyclostomata</taxon>
        <taxon>Hyperoartia</taxon>
        <taxon>Petromyzontiformes</taxon>
        <taxon>Petromyzontidae</taxon>
        <taxon>Petromyzon</taxon>
    </lineage>
</organism>
<proteinExistence type="evidence at protein level"/>
<accession>P33574</accession>
<sequence>APIKGYSVTVXLYIFDCQKWSSNYPHKPNFSDATDPKGPWCYTTDYXGAASVTRSGLRGDEQTPHRHTFSPQSFAGLTTACVKGTGEGYRGTAALTVSGKACQAWASQTPGDVYSCQGLVSNYCRNPDGEKLPWCYTTEYCNVPSCTGGPTGSEYHEILTPAQDXYTGIVEDYRGKMSPDAGLEENFCRNPDQDPQGPWCYTXNPEAXPRYCDVLSVVGGXEAQRNSXPRQISLQYGWQTVHVQSIHAEPRGVDIALVKIAPPAQLTACVITXWGETQGTGEDVQFCAGYPEGGTDPVSLVCLEPCVLAPVLVGVVILPXNDRXQ</sequence>
<keyword id="KW-0094">Blood coagulation</keyword>
<keyword id="KW-0903">Direct protein sequencing</keyword>
<keyword id="KW-1015">Disulfide bond</keyword>
<keyword id="KW-0280">Fibrinolysis</keyword>
<keyword id="KW-0356">Hemostasis</keyword>
<keyword id="KW-0378">Hydrolase</keyword>
<keyword id="KW-0420">Kringle</keyword>
<keyword id="KW-0645">Protease</keyword>
<keyword id="KW-0964">Secreted</keyword>
<keyword id="KW-0720">Serine protease</keyword>
<keyword id="KW-0797">Tissue remodeling</keyword>
<keyword id="KW-0865">Zymogen</keyword>
<dbReference type="EC" id="3.4.21.7"/>
<dbReference type="PIR" id="S33879">
    <property type="entry name" value="S33879"/>
</dbReference>
<dbReference type="MEROPS" id="S01.233"/>
<dbReference type="Proteomes" id="UP001318040">
    <property type="component" value="Unplaced"/>
</dbReference>
<dbReference type="GO" id="GO:0005615">
    <property type="term" value="C:extracellular space"/>
    <property type="evidence" value="ECO:0007669"/>
    <property type="project" value="TreeGrafter"/>
</dbReference>
<dbReference type="GO" id="GO:0004252">
    <property type="term" value="F:serine-type endopeptidase activity"/>
    <property type="evidence" value="ECO:0007669"/>
    <property type="project" value="UniProtKB-EC"/>
</dbReference>
<dbReference type="GO" id="GO:0005102">
    <property type="term" value="F:signaling receptor binding"/>
    <property type="evidence" value="ECO:0007669"/>
    <property type="project" value="TreeGrafter"/>
</dbReference>
<dbReference type="GO" id="GO:0007596">
    <property type="term" value="P:blood coagulation"/>
    <property type="evidence" value="ECO:0007669"/>
    <property type="project" value="UniProtKB-KW"/>
</dbReference>
<dbReference type="GO" id="GO:0042730">
    <property type="term" value="P:fibrinolysis"/>
    <property type="evidence" value="ECO:0007669"/>
    <property type="project" value="UniProtKB-KW"/>
</dbReference>
<dbReference type="GO" id="GO:0006508">
    <property type="term" value="P:proteolysis"/>
    <property type="evidence" value="ECO:0007669"/>
    <property type="project" value="UniProtKB-KW"/>
</dbReference>
<dbReference type="GO" id="GO:0048771">
    <property type="term" value="P:tissue remodeling"/>
    <property type="evidence" value="ECO:0007669"/>
    <property type="project" value="UniProtKB-KW"/>
</dbReference>
<dbReference type="CDD" id="cd00108">
    <property type="entry name" value="KR"/>
    <property type="match status" value="1"/>
</dbReference>
<dbReference type="Gene3D" id="2.40.20.10">
    <property type="entry name" value="Plasminogen Kringle 4"/>
    <property type="match status" value="2"/>
</dbReference>
<dbReference type="InterPro" id="IPR000001">
    <property type="entry name" value="Kringle"/>
</dbReference>
<dbReference type="InterPro" id="IPR013806">
    <property type="entry name" value="Kringle-like"/>
</dbReference>
<dbReference type="InterPro" id="IPR018056">
    <property type="entry name" value="Kringle_CS"/>
</dbReference>
<dbReference type="InterPro" id="IPR038178">
    <property type="entry name" value="Kringle_sf"/>
</dbReference>
<dbReference type="InterPro" id="IPR009003">
    <property type="entry name" value="Peptidase_S1_PA"/>
</dbReference>
<dbReference type="InterPro" id="IPR050759">
    <property type="entry name" value="Serine_protease_kringle"/>
</dbReference>
<dbReference type="PANTHER" id="PTHR24261:SF7">
    <property type="entry name" value="KRINGLE DOMAIN-CONTAINING PROTEIN"/>
    <property type="match status" value="1"/>
</dbReference>
<dbReference type="PANTHER" id="PTHR24261">
    <property type="entry name" value="PLASMINOGEN-RELATED"/>
    <property type="match status" value="1"/>
</dbReference>
<dbReference type="Pfam" id="PF00051">
    <property type="entry name" value="Kringle"/>
    <property type="match status" value="2"/>
</dbReference>
<dbReference type="PRINTS" id="PR00018">
    <property type="entry name" value="KRINGLE"/>
</dbReference>
<dbReference type="SMART" id="SM00130">
    <property type="entry name" value="KR"/>
    <property type="match status" value="2"/>
</dbReference>
<dbReference type="SUPFAM" id="SSF57440">
    <property type="entry name" value="Kringle-like"/>
    <property type="match status" value="3"/>
</dbReference>
<dbReference type="SUPFAM" id="SSF50494">
    <property type="entry name" value="Trypsin-like serine proteases"/>
    <property type="match status" value="1"/>
</dbReference>
<dbReference type="PROSITE" id="PS00021">
    <property type="entry name" value="KRINGLE_1"/>
    <property type="match status" value="2"/>
</dbReference>
<dbReference type="PROSITE" id="PS50070">
    <property type="entry name" value="KRINGLE_2"/>
    <property type="match status" value="2"/>
</dbReference>
<feature type="chain" id="PRO_0000088706" description="Plasminogen">
    <location>
        <begin position="1"/>
        <end position="325" status="greater than"/>
    </location>
</feature>
<feature type="domain" description="Kringle 1" evidence="1">
    <location>
        <begin position="80"/>
        <end position="146"/>
    </location>
</feature>
<feature type="domain" description="Kringle 2" evidence="1">
    <location>
        <begin position="159"/>
        <end position="217"/>
    </location>
</feature>
<feature type="disulfide bond" evidence="1">
    <location>
        <begin position="81"/>
        <end position="146"/>
    </location>
</feature>
<feature type="disulfide bond" evidence="1">
    <location>
        <begin position="102"/>
        <end position="135"/>
    </location>
</feature>
<feature type="disulfide bond" evidence="1">
    <location>
        <begin position="124"/>
        <end position="141"/>
    </location>
</feature>
<feature type="disulfide bond" evidence="1">
    <location>
        <begin position="188"/>
        <end position="212"/>
    </location>
</feature>
<feature type="non-consecutive residues" evidence="3">
    <location>
        <begin position="15"/>
        <end position="16"/>
    </location>
</feature>
<feature type="non-consecutive residues" evidence="3">
    <location>
        <begin position="34"/>
        <end position="35"/>
    </location>
</feature>
<feature type="non-consecutive residues" evidence="3">
    <location>
        <begin position="44"/>
        <end position="45"/>
    </location>
</feature>
<feature type="non-consecutive residues" evidence="3">
    <location>
        <begin position="76"/>
        <end position="77"/>
    </location>
</feature>
<feature type="non-consecutive residues" evidence="3">
    <location>
        <begin position="111"/>
        <end position="112"/>
    </location>
</feature>
<feature type="non-consecutive residues" evidence="3">
    <location>
        <begin position="138"/>
        <end position="139"/>
    </location>
</feature>
<feature type="non-consecutive residues" evidence="3">
    <location>
        <begin position="158"/>
        <end position="159"/>
    </location>
</feature>
<feature type="non-consecutive residues" evidence="3">
    <location>
        <begin position="178"/>
        <end position="179"/>
    </location>
</feature>
<feature type="non-consecutive residues" evidence="3">
    <location>
        <begin position="216"/>
        <end position="217"/>
    </location>
</feature>
<feature type="non-consecutive residues" evidence="3">
    <location>
        <begin position="236"/>
        <end position="237"/>
    </location>
</feature>
<feature type="non-consecutive residues" evidence="3">
    <location>
        <begin position="267"/>
        <end position="268"/>
    </location>
</feature>
<feature type="non-consecutive residues" evidence="3">
    <location>
        <begin position="282"/>
        <end position="283"/>
    </location>
</feature>
<feature type="non-consecutive residues" evidence="3">
    <location>
        <begin position="295"/>
        <end position="296"/>
    </location>
</feature>
<feature type="non-consecutive residues" evidence="3">
    <location>
        <begin position="307"/>
        <end position="308"/>
    </location>
</feature>
<feature type="non-consecutive residues" evidence="3">
    <location>
        <begin position="315"/>
        <end position="316"/>
    </location>
</feature>
<feature type="non-terminal residue">
    <location>
        <position position="325"/>
    </location>
</feature>
<protein>
    <recommendedName>
        <fullName>Plasminogen</fullName>
        <ecNumber>3.4.21.7</ecNumber>
    </recommendedName>
</protein>
<evidence type="ECO:0000255" key="1">
    <source>
        <dbReference type="PROSITE-ProRule" id="PRU00121"/>
    </source>
</evidence>
<evidence type="ECO:0000255" key="2">
    <source>
        <dbReference type="PROSITE-ProRule" id="PRU00274"/>
    </source>
</evidence>
<evidence type="ECO:0000305" key="3"/>
<name>PLMN_PETMA</name>
<reference key="1">
    <citation type="journal article" date="1993" name="Protein Seq. Data Anal.">
        <title>Isolation, characterization and partial amino acid sequence of lamprey plasminogen.</title>
        <authorList>
            <person name="Affolter M."/>
            <person name="Schaller J."/>
            <person name="Rickli E.E."/>
        </authorList>
    </citation>
    <scope>PROTEIN SEQUENCE</scope>
</reference>